<name>TPIS_ALKMQ</name>
<reference key="1">
    <citation type="journal article" date="2016" name="Genome Announc.">
        <title>Complete genome sequence of Alkaliphilus metalliredigens strain QYMF, an alkaliphilic and metal-reducing bacterium isolated from borax-contaminated leachate ponds.</title>
        <authorList>
            <person name="Hwang C."/>
            <person name="Copeland A."/>
            <person name="Lucas S."/>
            <person name="Lapidus A."/>
            <person name="Barry K."/>
            <person name="Detter J.C."/>
            <person name="Glavina Del Rio T."/>
            <person name="Hammon N."/>
            <person name="Israni S."/>
            <person name="Dalin E."/>
            <person name="Tice H."/>
            <person name="Pitluck S."/>
            <person name="Chertkov O."/>
            <person name="Brettin T."/>
            <person name="Bruce D."/>
            <person name="Han C."/>
            <person name="Schmutz J."/>
            <person name="Larimer F."/>
            <person name="Land M.L."/>
            <person name="Hauser L."/>
            <person name="Kyrpides N."/>
            <person name="Mikhailova N."/>
            <person name="Ye Q."/>
            <person name="Zhou J."/>
            <person name="Richardson P."/>
            <person name="Fields M.W."/>
        </authorList>
    </citation>
    <scope>NUCLEOTIDE SEQUENCE [LARGE SCALE GENOMIC DNA]</scope>
    <source>
        <strain>QYMF</strain>
    </source>
</reference>
<keyword id="KW-0963">Cytoplasm</keyword>
<keyword id="KW-0312">Gluconeogenesis</keyword>
<keyword id="KW-0324">Glycolysis</keyword>
<keyword id="KW-0413">Isomerase</keyword>
<keyword id="KW-1185">Reference proteome</keyword>
<proteinExistence type="inferred from homology"/>
<feature type="chain" id="PRO_1000058106" description="Triosephosphate isomerase">
    <location>
        <begin position="1"/>
        <end position="248"/>
    </location>
</feature>
<feature type="active site" description="Electrophile" evidence="1">
    <location>
        <position position="94"/>
    </location>
</feature>
<feature type="active site" description="Proton acceptor" evidence="1">
    <location>
        <position position="166"/>
    </location>
</feature>
<feature type="binding site" evidence="1">
    <location>
        <begin position="9"/>
        <end position="11"/>
    </location>
    <ligand>
        <name>substrate</name>
    </ligand>
</feature>
<feature type="binding site" evidence="1">
    <location>
        <position position="172"/>
    </location>
    <ligand>
        <name>substrate</name>
    </ligand>
</feature>
<feature type="binding site" evidence="1">
    <location>
        <position position="212"/>
    </location>
    <ligand>
        <name>substrate</name>
    </ligand>
</feature>
<feature type="binding site" evidence="1">
    <location>
        <begin position="233"/>
        <end position="234"/>
    </location>
    <ligand>
        <name>substrate</name>
    </ligand>
</feature>
<dbReference type="EC" id="5.3.1.1" evidence="1"/>
<dbReference type="EMBL" id="CP000724">
    <property type="protein sequence ID" value="ABR49700.1"/>
    <property type="molecule type" value="Genomic_DNA"/>
</dbReference>
<dbReference type="RefSeq" id="WP_012064660.1">
    <property type="nucleotide sequence ID" value="NC_009633.1"/>
</dbReference>
<dbReference type="SMR" id="A6TU32"/>
<dbReference type="STRING" id="293826.Amet_3578"/>
<dbReference type="KEGG" id="amt:Amet_3578"/>
<dbReference type="eggNOG" id="COG0149">
    <property type="taxonomic scope" value="Bacteria"/>
</dbReference>
<dbReference type="HOGENOM" id="CLU_024251_2_3_9"/>
<dbReference type="OrthoDB" id="9809429at2"/>
<dbReference type="UniPathway" id="UPA00109">
    <property type="reaction ID" value="UER00189"/>
</dbReference>
<dbReference type="UniPathway" id="UPA00138"/>
<dbReference type="Proteomes" id="UP000001572">
    <property type="component" value="Chromosome"/>
</dbReference>
<dbReference type="GO" id="GO:0005829">
    <property type="term" value="C:cytosol"/>
    <property type="evidence" value="ECO:0007669"/>
    <property type="project" value="TreeGrafter"/>
</dbReference>
<dbReference type="GO" id="GO:0004807">
    <property type="term" value="F:triose-phosphate isomerase activity"/>
    <property type="evidence" value="ECO:0007669"/>
    <property type="project" value="UniProtKB-UniRule"/>
</dbReference>
<dbReference type="GO" id="GO:0006094">
    <property type="term" value="P:gluconeogenesis"/>
    <property type="evidence" value="ECO:0007669"/>
    <property type="project" value="UniProtKB-UniRule"/>
</dbReference>
<dbReference type="GO" id="GO:0046166">
    <property type="term" value="P:glyceraldehyde-3-phosphate biosynthetic process"/>
    <property type="evidence" value="ECO:0007669"/>
    <property type="project" value="TreeGrafter"/>
</dbReference>
<dbReference type="GO" id="GO:0019563">
    <property type="term" value="P:glycerol catabolic process"/>
    <property type="evidence" value="ECO:0007669"/>
    <property type="project" value="TreeGrafter"/>
</dbReference>
<dbReference type="GO" id="GO:0006096">
    <property type="term" value="P:glycolytic process"/>
    <property type="evidence" value="ECO:0007669"/>
    <property type="project" value="UniProtKB-UniRule"/>
</dbReference>
<dbReference type="CDD" id="cd00311">
    <property type="entry name" value="TIM"/>
    <property type="match status" value="1"/>
</dbReference>
<dbReference type="FunFam" id="3.20.20.70:FF:000016">
    <property type="entry name" value="Triosephosphate isomerase"/>
    <property type="match status" value="1"/>
</dbReference>
<dbReference type="Gene3D" id="3.20.20.70">
    <property type="entry name" value="Aldolase class I"/>
    <property type="match status" value="1"/>
</dbReference>
<dbReference type="HAMAP" id="MF_00147_B">
    <property type="entry name" value="TIM_B"/>
    <property type="match status" value="1"/>
</dbReference>
<dbReference type="InterPro" id="IPR013785">
    <property type="entry name" value="Aldolase_TIM"/>
</dbReference>
<dbReference type="InterPro" id="IPR035990">
    <property type="entry name" value="TIM_sf"/>
</dbReference>
<dbReference type="InterPro" id="IPR022896">
    <property type="entry name" value="TrioseP_Isoase_bac/euk"/>
</dbReference>
<dbReference type="InterPro" id="IPR000652">
    <property type="entry name" value="Triosephosphate_isomerase"/>
</dbReference>
<dbReference type="InterPro" id="IPR020861">
    <property type="entry name" value="Triosephosphate_isomerase_AS"/>
</dbReference>
<dbReference type="NCBIfam" id="TIGR00419">
    <property type="entry name" value="tim"/>
    <property type="match status" value="1"/>
</dbReference>
<dbReference type="PANTHER" id="PTHR21139">
    <property type="entry name" value="TRIOSEPHOSPHATE ISOMERASE"/>
    <property type="match status" value="1"/>
</dbReference>
<dbReference type="PANTHER" id="PTHR21139:SF42">
    <property type="entry name" value="TRIOSEPHOSPHATE ISOMERASE"/>
    <property type="match status" value="1"/>
</dbReference>
<dbReference type="Pfam" id="PF00121">
    <property type="entry name" value="TIM"/>
    <property type="match status" value="1"/>
</dbReference>
<dbReference type="SUPFAM" id="SSF51351">
    <property type="entry name" value="Triosephosphate isomerase (TIM)"/>
    <property type="match status" value="1"/>
</dbReference>
<dbReference type="PROSITE" id="PS00171">
    <property type="entry name" value="TIM_1"/>
    <property type="match status" value="1"/>
</dbReference>
<dbReference type="PROSITE" id="PS51440">
    <property type="entry name" value="TIM_2"/>
    <property type="match status" value="1"/>
</dbReference>
<comment type="function">
    <text evidence="1">Involved in the gluconeogenesis. Catalyzes stereospecifically the conversion of dihydroxyacetone phosphate (DHAP) to D-glyceraldehyde-3-phosphate (G3P).</text>
</comment>
<comment type="catalytic activity">
    <reaction evidence="1">
        <text>D-glyceraldehyde 3-phosphate = dihydroxyacetone phosphate</text>
        <dbReference type="Rhea" id="RHEA:18585"/>
        <dbReference type="ChEBI" id="CHEBI:57642"/>
        <dbReference type="ChEBI" id="CHEBI:59776"/>
        <dbReference type="EC" id="5.3.1.1"/>
    </reaction>
</comment>
<comment type="pathway">
    <text evidence="1">Carbohydrate biosynthesis; gluconeogenesis.</text>
</comment>
<comment type="pathway">
    <text evidence="1">Carbohydrate degradation; glycolysis; D-glyceraldehyde 3-phosphate from glycerone phosphate: step 1/1.</text>
</comment>
<comment type="subunit">
    <text evidence="1">Homodimer.</text>
</comment>
<comment type="subcellular location">
    <subcellularLocation>
        <location evidence="1">Cytoplasm</location>
    </subcellularLocation>
</comment>
<comment type="similarity">
    <text evidence="1">Belongs to the triosephosphate isomerase family.</text>
</comment>
<protein>
    <recommendedName>
        <fullName evidence="1">Triosephosphate isomerase</fullName>
        <shortName evidence="1">TIM</shortName>
        <shortName evidence="1">TPI</shortName>
        <ecNumber evidence="1">5.3.1.1</ecNumber>
    </recommendedName>
    <alternativeName>
        <fullName evidence="1">Triose-phosphate isomerase</fullName>
    </alternativeName>
</protein>
<sequence length="248" mass="27484">MRKPIIAGNWKMNKTVAETLQFINEIRDQAETTDVEVVLCCPFTALSEAKKALGASKIKLGAQNMHWEDNGAFTGEISAEMLKELGVDYILIGHSERRQYFNETDETVNKKIKKALEQKLMPILCVGETLQEREAAQTFDVIKNQITIDLEGILPDSMKDIVIAYEPIWAIGTGKTASSQDANHVIAYIRQLIQEKYDDGISETVRIQYGGSVKPENATEIMNEEDIDGALVGGASLKADAFLGIVNF</sequence>
<organism>
    <name type="scientific">Alkaliphilus metalliredigens (strain QYMF)</name>
    <dbReference type="NCBI Taxonomy" id="293826"/>
    <lineage>
        <taxon>Bacteria</taxon>
        <taxon>Bacillati</taxon>
        <taxon>Bacillota</taxon>
        <taxon>Clostridia</taxon>
        <taxon>Peptostreptococcales</taxon>
        <taxon>Natronincolaceae</taxon>
        <taxon>Alkaliphilus</taxon>
    </lineage>
</organism>
<evidence type="ECO:0000255" key="1">
    <source>
        <dbReference type="HAMAP-Rule" id="MF_00147"/>
    </source>
</evidence>
<gene>
    <name evidence="1" type="primary">tpiA</name>
    <name type="ordered locus">Amet_3578</name>
</gene>
<accession>A6TU32</accession>